<gene>
    <name evidence="1" type="primary">pfkA</name>
    <name type="ordered locus">BCAH187_A4725</name>
</gene>
<comment type="function">
    <text evidence="1">Catalyzes the phosphorylation of D-fructose 6-phosphate to fructose 1,6-bisphosphate by ATP, the first committing step of glycolysis.</text>
</comment>
<comment type="catalytic activity">
    <reaction evidence="1">
        <text>beta-D-fructose 6-phosphate + ATP = beta-D-fructose 1,6-bisphosphate + ADP + H(+)</text>
        <dbReference type="Rhea" id="RHEA:16109"/>
        <dbReference type="ChEBI" id="CHEBI:15378"/>
        <dbReference type="ChEBI" id="CHEBI:30616"/>
        <dbReference type="ChEBI" id="CHEBI:32966"/>
        <dbReference type="ChEBI" id="CHEBI:57634"/>
        <dbReference type="ChEBI" id="CHEBI:456216"/>
        <dbReference type="EC" id="2.7.1.11"/>
    </reaction>
</comment>
<comment type="cofactor">
    <cofactor evidence="1">
        <name>Mg(2+)</name>
        <dbReference type="ChEBI" id="CHEBI:18420"/>
    </cofactor>
</comment>
<comment type="activity regulation">
    <text evidence="1">Allosterically activated by ADP and other diphosphonucleosides, and allosterically inhibited by phosphoenolpyruvate.</text>
</comment>
<comment type="pathway">
    <text evidence="1">Carbohydrate degradation; glycolysis; D-glyceraldehyde 3-phosphate and glycerone phosphate from D-glucose: step 3/4.</text>
</comment>
<comment type="subunit">
    <text evidence="1">Homotetramer.</text>
</comment>
<comment type="subcellular location">
    <subcellularLocation>
        <location evidence="1">Cytoplasm</location>
    </subcellularLocation>
</comment>
<comment type="similarity">
    <text evidence="1">Belongs to the phosphofructokinase type A (PFKA) family. ATP-dependent PFK group I subfamily. Prokaryotic clade 'B1' sub-subfamily.</text>
</comment>
<organism>
    <name type="scientific">Bacillus cereus (strain AH187)</name>
    <dbReference type="NCBI Taxonomy" id="405534"/>
    <lineage>
        <taxon>Bacteria</taxon>
        <taxon>Bacillati</taxon>
        <taxon>Bacillota</taxon>
        <taxon>Bacilli</taxon>
        <taxon>Bacillales</taxon>
        <taxon>Bacillaceae</taxon>
        <taxon>Bacillus</taxon>
        <taxon>Bacillus cereus group</taxon>
    </lineage>
</organism>
<name>PFKA_BACC7</name>
<feature type="chain" id="PRO_1000120030" description="ATP-dependent 6-phosphofructokinase">
    <location>
        <begin position="1"/>
        <end position="319"/>
    </location>
</feature>
<feature type="active site" description="Proton acceptor" evidence="1">
    <location>
        <position position="127"/>
    </location>
</feature>
<feature type="binding site" evidence="1">
    <location>
        <position position="11"/>
    </location>
    <ligand>
        <name>ATP</name>
        <dbReference type="ChEBI" id="CHEBI:30616"/>
    </ligand>
</feature>
<feature type="binding site" evidence="1">
    <location>
        <begin position="21"/>
        <end position="25"/>
    </location>
    <ligand>
        <name>ADP</name>
        <dbReference type="ChEBI" id="CHEBI:456216"/>
        <note>allosteric activator; ligand shared between dimeric partners</note>
    </ligand>
</feature>
<feature type="binding site" evidence="1">
    <location>
        <begin position="72"/>
        <end position="73"/>
    </location>
    <ligand>
        <name>ATP</name>
        <dbReference type="ChEBI" id="CHEBI:30616"/>
    </ligand>
</feature>
<feature type="binding site" evidence="1">
    <location>
        <begin position="102"/>
        <end position="105"/>
    </location>
    <ligand>
        <name>ATP</name>
        <dbReference type="ChEBI" id="CHEBI:30616"/>
    </ligand>
</feature>
<feature type="binding site" evidence="1">
    <location>
        <position position="103"/>
    </location>
    <ligand>
        <name>Mg(2+)</name>
        <dbReference type="ChEBI" id="CHEBI:18420"/>
        <note>catalytic</note>
    </ligand>
</feature>
<feature type="binding site" description="in other chain" evidence="1">
    <location>
        <begin position="125"/>
        <end position="127"/>
    </location>
    <ligand>
        <name>substrate</name>
        <note>ligand shared between dimeric partners</note>
    </ligand>
</feature>
<feature type="binding site" description="in other chain" evidence="1">
    <location>
        <position position="154"/>
    </location>
    <ligand>
        <name>ADP</name>
        <dbReference type="ChEBI" id="CHEBI:456216"/>
        <note>allosteric activator; ligand shared between dimeric partners</note>
    </ligand>
</feature>
<feature type="binding site" evidence="1">
    <location>
        <position position="162"/>
    </location>
    <ligand>
        <name>substrate</name>
        <note>ligand shared between dimeric partners</note>
    </ligand>
</feature>
<feature type="binding site" description="in other chain" evidence="1">
    <location>
        <begin position="169"/>
        <end position="171"/>
    </location>
    <ligand>
        <name>substrate</name>
        <note>ligand shared between dimeric partners</note>
    </ligand>
</feature>
<feature type="binding site" description="in other chain" evidence="1">
    <location>
        <begin position="185"/>
        <end position="187"/>
    </location>
    <ligand>
        <name>ADP</name>
        <dbReference type="ChEBI" id="CHEBI:456216"/>
        <note>allosteric activator; ligand shared between dimeric partners</note>
    </ligand>
</feature>
<feature type="binding site" description="in other chain" evidence="1">
    <location>
        <position position="211"/>
    </location>
    <ligand>
        <name>ADP</name>
        <dbReference type="ChEBI" id="CHEBI:456216"/>
        <note>allosteric activator; ligand shared between dimeric partners</note>
    </ligand>
</feature>
<feature type="binding site" description="in other chain" evidence="1">
    <location>
        <begin position="213"/>
        <end position="215"/>
    </location>
    <ligand>
        <name>ADP</name>
        <dbReference type="ChEBI" id="CHEBI:456216"/>
        <note>allosteric activator; ligand shared between dimeric partners</note>
    </ligand>
</feature>
<feature type="binding site" description="in other chain" evidence="1">
    <location>
        <position position="222"/>
    </location>
    <ligand>
        <name>substrate</name>
        <note>ligand shared between dimeric partners</note>
    </ligand>
</feature>
<feature type="binding site" evidence="1">
    <location>
        <position position="243"/>
    </location>
    <ligand>
        <name>substrate</name>
        <note>ligand shared between dimeric partners</note>
    </ligand>
</feature>
<feature type="binding site" description="in other chain" evidence="1">
    <location>
        <begin position="249"/>
        <end position="252"/>
    </location>
    <ligand>
        <name>substrate</name>
        <note>ligand shared between dimeric partners</note>
    </ligand>
</feature>
<proteinExistence type="inferred from homology"/>
<accession>B7HRN9</accession>
<reference key="1">
    <citation type="submission" date="2008-10" db="EMBL/GenBank/DDBJ databases">
        <title>Genome sequence of Bacillus cereus AH187.</title>
        <authorList>
            <person name="Dodson R.J."/>
            <person name="Durkin A.S."/>
            <person name="Rosovitz M.J."/>
            <person name="Rasko D.A."/>
            <person name="Kolsto A.B."/>
            <person name="Okstad O.A."/>
            <person name="Ravel J."/>
            <person name="Sutton G."/>
        </authorList>
    </citation>
    <scope>NUCLEOTIDE SEQUENCE [LARGE SCALE GENOMIC DNA]</scope>
    <source>
        <strain>AH187</strain>
    </source>
</reference>
<evidence type="ECO:0000255" key="1">
    <source>
        <dbReference type="HAMAP-Rule" id="MF_00339"/>
    </source>
</evidence>
<protein>
    <recommendedName>
        <fullName evidence="1">ATP-dependent 6-phosphofructokinase</fullName>
        <shortName evidence="1">ATP-PFK</shortName>
        <shortName evidence="1">Phosphofructokinase</shortName>
        <ecNumber evidence="1">2.7.1.11</ecNumber>
    </recommendedName>
    <alternativeName>
        <fullName evidence="1">Phosphohexokinase</fullName>
    </alternativeName>
</protein>
<keyword id="KW-0021">Allosteric enzyme</keyword>
<keyword id="KW-0067">ATP-binding</keyword>
<keyword id="KW-0963">Cytoplasm</keyword>
<keyword id="KW-0324">Glycolysis</keyword>
<keyword id="KW-0418">Kinase</keyword>
<keyword id="KW-0460">Magnesium</keyword>
<keyword id="KW-0479">Metal-binding</keyword>
<keyword id="KW-0547">Nucleotide-binding</keyword>
<keyword id="KW-0808">Transferase</keyword>
<dbReference type="EC" id="2.7.1.11" evidence="1"/>
<dbReference type="EMBL" id="CP001177">
    <property type="protein sequence ID" value="ACJ78502.1"/>
    <property type="molecule type" value="Genomic_DNA"/>
</dbReference>
<dbReference type="SMR" id="B7HRN9"/>
<dbReference type="KEGG" id="bcr:BCAH187_A4725"/>
<dbReference type="HOGENOM" id="CLU_020655_0_1_9"/>
<dbReference type="UniPathway" id="UPA00109">
    <property type="reaction ID" value="UER00182"/>
</dbReference>
<dbReference type="Proteomes" id="UP000002214">
    <property type="component" value="Chromosome"/>
</dbReference>
<dbReference type="GO" id="GO:0005945">
    <property type="term" value="C:6-phosphofructokinase complex"/>
    <property type="evidence" value="ECO:0007669"/>
    <property type="project" value="TreeGrafter"/>
</dbReference>
<dbReference type="GO" id="GO:0003872">
    <property type="term" value="F:6-phosphofructokinase activity"/>
    <property type="evidence" value="ECO:0007669"/>
    <property type="project" value="UniProtKB-UniRule"/>
</dbReference>
<dbReference type="GO" id="GO:0016208">
    <property type="term" value="F:AMP binding"/>
    <property type="evidence" value="ECO:0007669"/>
    <property type="project" value="TreeGrafter"/>
</dbReference>
<dbReference type="GO" id="GO:0005524">
    <property type="term" value="F:ATP binding"/>
    <property type="evidence" value="ECO:0007669"/>
    <property type="project" value="UniProtKB-KW"/>
</dbReference>
<dbReference type="GO" id="GO:0070095">
    <property type="term" value="F:fructose-6-phosphate binding"/>
    <property type="evidence" value="ECO:0007669"/>
    <property type="project" value="TreeGrafter"/>
</dbReference>
<dbReference type="GO" id="GO:0042802">
    <property type="term" value="F:identical protein binding"/>
    <property type="evidence" value="ECO:0007669"/>
    <property type="project" value="TreeGrafter"/>
</dbReference>
<dbReference type="GO" id="GO:0046872">
    <property type="term" value="F:metal ion binding"/>
    <property type="evidence" value="ECO:0007669"/>
    <property type="project" value="UniProtKB-KW"/>
</dbReference>
<dbReference type="GO" id="GO:0048029">
    <property type="term" value="F:monosaccharide binding"/>
    <property type="evidence" value="ECO:0007669"/>
    <property type="project" value="TreeGrafter"/>
</dbReference>
<dbReference type="GO" id="GO:0061621">
    <property type="term" value="P:canonical glycolysis"/>
    <property type="evidence" value="ECO:0007669"/>
    <property type="project" value="TreeGrafter"/>
</dbReference>
<dbReference type="GO" id="GO:0030388">
    <property type="term" value="P:fructose 1,6-bisphosphate metabolic process"/>
    <property type="evidence" value="ECO:0007669"/>
    <property type="project" value="TreeGrafter"/>
</dbReference>
<dbReference type="GO" id="GO:0006002">
    <property type="term" value="P:fructose 6-phosphate metabolic process"/>
    <property type="evidence" value="ECO:0007669"/>
    <property type="project" value="InterPro"/>
</dbReference>
<dbReference type="CDD" id="cd00763">
    <property type="entry name" value="Bacterial_PFK"/>
    <property type="match status" value="1"/>
</dbReference>
<dbReference type="FunFam" id="3.40.50.450:FF:000001">
    <property type="entry name" value="ATP-dependent 6-phosphofructokinase"/>
    <property type="match status" value="1"/>
</dbReference>
<dbReference type="FunFam" id="3.40.50.460:FF:000002">
    <property type="entry name" value="ATP-dependent 6-phosphofructokinase"/>
    <property type="match status" value="1"/>
</dbReference>
<dbReference type="Gene3D" id="3.40.50.450">
    <property type="match status" value="1"/>
</dbReference>
<dbReference type="Gene3D" id="3.40.50.460">
    <property type="entry name" value="Phosphofructokinase domain"/>
    <property type="match status" value="1"/>
</dbReference>
<dbReference type="HAMAP" id="MF_00339">
    <property type="entry name" value="Phosphofructokinase_I_B1"/>
    <property type="match status" value="1"/>
</dbReference>
<dbReference type="InterPro" id="IPR022953">
    <property type="entry name" value="ATP_PFK"/>
</dbReference>
<dbReference type="InterPro" id="IPR012003">
    <property type="entry name" value="ATP_PFK_prok-type"/>
</dbReference>
<dbReference type="InterPro" id="IPR012828">
    <property type="entry name" value="PFKA_ATP_prok"/>
</dbReference>
<dbReference type="InterPro" id="IPR015912">
    <property type="entry name" value="Phosphofructokinase_CS"/>
</dbReference>
<dbReference type="InterPro" id="IPR000023">
    <property type="entry name" value="Phosphofructokinase_dom"/>
</dbReference>
<dbReference type="InterPro" id="IPR035966">
    <property type="entry name" value="PKF_sf"/>
</dbReference>
<dbReference type="NCBIfam" id="TIGR02482">
    <property type="entry name" value="PFKA_ATP"/>
    <property type="match status" value="1"/>
</dbReference>
<dbReference type="NCBIfam" id="NF002872">
    <property type="entry name" value="PRK03202.1"/>
    <property type="match status" value="1"/>
</dbReference>
<dbReference type="PANTHER" id="PTHR13697:SF4">
    <property type="entry name" value="ATP-DEPENDENT 6-PHOSPHOFRUCTOKINASE"/>
    <property type="match status" value="1"/>
</dbReference>
<dbReference type="PANTHER" id="PTHR13697">
    <property type="entry name" value="PHOSPHOFRUCTOKINASE"/>
    <property type="match status" value="1"/>
</dbReference>
<dbReference type="Pfam" id="PF00365">
    <property type="entry name" value="PFK"/>
    <property type="match status" value="1"/>
</dbReference>
<dbReference type="PIRSF" id="PIRSF000532">
    <property type="entry name" value="ATP_PFK_prok"/>
    <property type="match status" value="1"/>
</dbReference>
<dbReference type="PRINTS" id="PR00476">
    <property type="entry name" value="PHFRCTKINASE"/>
</dbReference>
<dbReference type="SUPFAM" id="SSF53784">
    <property type="entry name" value="Phosphofructokinase"/>
    <property type="match status" value="1"/>
</dbReference>
<dbReference type="PROSITE" id="PS00433">
    <property type="entry name" value="PHOSPHOFRUCTOKINASE"/>
    <property type="match status" value="1"/>
</dbReference>
<sequence length="319" mass="34308">MKRIGVLTSGGDSPGMNAAIRAVVRKAIFHDIEVYGIYHGYAGLISGHIEKLELGSVGDIIHRGGTKLYTARCPEFKDPEVRLKGIEQLKKHGIEGLVVIGGDGSYQGAKKLTEQGFPCVGVPGTIDNDIPGTDFTIGFDTALNTVIDAIDKIRDTATSHERTYVIEVMGRHAGDIALWAGLADGAETILIPEEEYDMEDVIARLKRGSERGKKHSIIVVAEGVGSAIDIGKHIEEATNFDTRVTVLGHVQRGGSPSAQDRVLASRLGARAVELLIAGKGGRCVGIQDNKLVDHDIIEALAQKHTIDKDMYQLSKELSI</sequence>